<comment type="function">
    <text evidence="5 7 8 9 11 12 13 14">Inhibitory receptor involved in the down-regulation of the immune response and the development of immune tolerance (PubMed:11875462). Receptor for FN1 (PubMed:34089617). Receptor for apolipoprotein APOE (PubMed:30333625). Receptor for ALCAM/CD166 (PubMed:29263213). Inhibits receptor-mediated phosphorylation of cellular proteins and mobilization of intracellular calcium ions (PubMed:9151699). Inhibits FCGR1A/CD64-mediated monocyte activation by inducing phosphatase-mediated down-regulation of the phosphorylation of multiple proteins including LCK, SYK, LAT and ERK, leading to a reduction in TNF production (PubMed:19833736). This inhibition of monocyte activation occurs at least in part via binding to FN1 (PubMed:34089617). Inhibits T cell proliferation, inducing anergy, suppressing the differentiation of IFNG-producing CD8+ cytotoxic T cells and enhancing the generation of CD8+ T suppressor cells (PubMed:16493035, PubMed:19833736, PubMed:29263213). Induces up-regulation of CD86 on dendritic cells (PubMed:19860908). Interferes with TNFRSF5-signaling and NF-kappa-B up-regulation (PubMed:11875462).</text>
</comment>
<comment type="subunit">
    <text evidence="7 14">Interacts with PTPN6.</text>
</comment>
<comment type="interaction">
    <interactant intactId="EBI-2805248">
        <id>Q8NHJ6</id>
    </interactant>
    <interactant intactId="EBI-78260">
        <id>P29350</id>
        <label>PTPN6</label>
    </interactant>
    <organismsDiffer>false</organismsDiffer>
    <experiments>4</experiments>
</comment>
<comment type="subcellular location">
    <subcellularLocation>
        <location evidence="8 14">Cell membrane</location>
        <topology evidence="14">Single-pass type I membrane protein</topology>
    </subcellularLocation>
    <text evidence="14">Ligand binding leads to internalization and translocation to an antigen-processing compartment.</text>
</comment>
<comment type="alternative products">
    <event type="alternative splicing"/>
    <isoform>
        <id>Q8NHJ6-1</id>
        <name>1</name>
        <sequence type="displayed"/>
    </isoform>
    <isoform>
        <id>Q8NHJ6-2</id>
        <name>2</name>
        <sequence type="described" ref="VSP_008460"/>
    </isoform>
    <isoform>
        <id>Q8NHJ6-3</id>
        <name>3</name>
        <sequence type="described" ref="VSP_035939"/>
    </isoform>
</comment>
<comment type="tissue specificity">
    <text evidence="8 12 14 15 16">Detected on monocytes, macrophages, dendritic cells, natural killer cells and B-cells (at protein level). Expressed in the lung.</text>
</comment>
<comment type="induction">
    <text evidence="5 9">Induced on monocyte-derived macrophages by S.typhimurium infection (PubMed:19860908). Induced on monocytes and dendritic cells upon contact with CD8(+)CD28(-) alloantigen-specific T suppressor (Ts) cells (PubMed:11875462).</text>
</comment>
<comment type="domain">
    <text>Contains 3 copies of a cytoplasmic motif that is referred to as the immunoreceptor tyrosine-based inhibitor motif (ITIM). This motif is involved in modulation of cellular responses. The phosphorylated ITIM motif can bind the SH2 domain of several SH2-containing phosphatases.</text>
</comment>
<comment type="miscellaneous">
    <text evidence="12">Activated by APOE on acute myeloid leukemia (AML) cells which leads to suppression of T cell proliferation and promotion of AML cell migration and infiltration (PubMed:30333625). LILRB4 signaling on AML cells is mediated by PTPN11/SHP-2 (PubMed:30333625).</text>
</comment>
<comment type="miscellaneous">
    <molecule>Isoform 2</molecule>
    <text evidence="21">Alternative use of an acceptor site.</text>
</comment>
<accession>Q8NHJ6</accession>
<accession>A8MVL8</accession>
<accession>O15468</accession>
<accession>O75021</accession>
<accession>Q6FGQ9</accession>
<accession>Q8N1C7</accession>
<accession>Q8NHL5</accession>
<protein>
    <recommendedName>
        <fullName>Leukocyte immunoglobulin-like receptor subfamily B member 4</fullName>
        <shortName evidence="17">B4</shortName>
    </recommendedName>
    <alternativeName>
        <fullName>CD85 antigen-like family member K</fullName>
    </alternativeName>
    <alternativeName>
        <fullName>Immunoglobulin-like transcript 3</fullName>
        <shortName>ILT-3</shortName>
    </alternativeName>
    <alternativeName>
        <fullName>Leukocyte immunoglobulin-like receptor 5</fullName>
        <shortName>LIR-5</shortName>
    </alternativeName>
    <alternativeName>
        <fullName>Monocyte inhibitory receptor HM18</fullName>
    </alternativeName>
    <cdAntigenName>CD85k</cdAntigenName>
</protein>
<keyword id="KW-0002">3D-structure</keyword>
<keyword id="KW-1064">Adaptive immunity</keyword>
<keyword id="KW-0025">Alternative splicing</keyword>
<keyword id="KW-1003">Cell membrane</keyword>
<keyword id="KW-1015">Disulfide bond</keyword>
<keyword id="KW-0391">Immunity</keyword>
<keyword id="KW-0393">Immunoglobulin domain</keyword>
<keyword id="KW-0472">Membrane</keyword>
<keyword id="KW-0597">Phosphoprotein</keyword>
<keyword id="KW-1267">Proteomics identification</keyword>
<keyword id="KW-0675">Receptor</keyword>
<keyword id="KW-1185">Reference proteome</keyword>
<keyword id="KW-0677">Repeat</keyword>
<keyword id="KW-0732">Signal</keyword>
<keyword id="KW-0812">Transmembrane</keyword>
<keyword id="KW-1133">Transmembrane helix</keyword>
<gene>
    <name type="primary">LILRB4</name>
    <name type="synonym">ILT3</name>
    <name type="synonym">LIR5</name>
</gene>
<reference key="1">
    <citation type="journal article" date="1997" name="J. Immunol.">
        <title>Molecular identification of a novel family of human Ig superfamily members that possess immunoreceptor tyrosine-based inhibition motifs and homology to the mouse gp49B1 inhibitory receptor.</title>
        <authorList>
            <person name="Arm J.P."/>
            <person name="Nwankwo C."/>
            <person name="Austen K.F."/>
        </authorList>
    </citation>
    <scope>NUCLEOTIDE SEQUENCE [MRNA] (ISOFORM 1)</scope>
    <scope>TISSUE SPECIFICITY</scope>
    <scope>VARIANT GLY-223</scope>
    <source>
        <tissue>Monocyte</tissue>
    </source>
</reference>
<reference key="2">
    <citation type="journal article" date="1997" name="J. Immunol.">
        <title>A family of human lymphoid and myeloid Ig-like receptors, some of which bind to MHC class I molecules.</title>
        <authorList>
            <person name="Borges L."/>
            <person name="Hsu M.-L."/>
            <person name="Fanger N."/>
            <person name="Kubin M."/>
            <person name="Cosman D."/>
        </authorList>
    </citation>
    <scope>NUCLEOTIDE SEQUENCE [MRNA] (ISOFORM 1)</scope>
    <scope>VARIANTS GLY-223 AND ARG-414</scope>
    <scope>TISSUE SPECIFICITY</scope>
    <source>
        <tissue>Peripheral blood leukocyte</tissue>
    </source>
</reference>
<reference key="3">
    <citation type="journal article" date="2000" name="Immunogenetics">
        <title>Genomic organization of the human leukocyte immunoglobulin-like receptors within the leukocyte receptor complex on chromosome 19q13.4.</title>
        <authorList>
            <person name="Liu W.R."/>
            <person name="Kim J."/>
            <person name="Nwankwo C."/>
            <person name="Ashworth L.K."/>
            <person name="Arm J.P."/>
        </authorList>
    </citation>
    <scope>NUCLEOTIDE SEQUENCE [GENOMIC DNA] (ISOFORM 1)</scope>
    <scope>VARIANTS LEU-5; GLY-223 AND GLU-362</scope>
</reference>
<reference key="4">
    <citation type="submission" date="2000-07" db="EMBL/GenBank/DDBJ databases">
        <authorList>
            <person name="Canavez F.C."/>
        </authorList>
    </citation>
    <scope>NUCLEOTIDE SEQUENCE [MRNA] (ISOFORM 2)</scope>
</reference>
<reference key="5">
    <citation type="submission" date="2004-06" db="EMBL/GenBank/DDBJ databases">
        <title>Cloning of human full open reading frames in Gateway(TM) system entry vector (pDONR201).</title>
        <authorList>
            <person name="Halleck A."/>
            <person name="Ebert L."/>
            <person name="Mkoundinya M."/>
            <person name="Schick M."/>
            <person name="Eisenstein S."/>
            <person name="Neubert P."/>
            <person name="Kstrang K."/>
            <person name="Schatten R."/>
            <person name="Shen B."/>
            <person name="Henze S."/>
            <person name="Mar W."/>
            <person name="Korn B."/>
            <person name="Zuo D."/>
            <person name="Hu Y."/>
            <person name="LaBaer J."/>
        </authorList>
    </citation>
    <scope>NUCLEOTIDE SEQUENCE [LARGE SCALE MRNA] (ISOFORM 2)</scope>
</reference>
<reference key="6">
    <citation type="submission" date="2004-07" db="EMBL/GenBank/DDBJ databases">
        <title>Full-length cDNA libraries and normalization.</title>
        <authorList>
            <person name="Li W.B."/>
            <person name="Gruber C."/>
            <person name="Jessee J."/>
            <person name="Polayes D."/>
        </authorList>
    </citation>
    <scope>NUCLEOTIDE SEQUENCE [LARGE SCALE MRNA] (ISOFORM 3)</scope>
    <source>
        <tissue>Placenta</tissue>
    </source>
</reference>
<reference key="7">
    <citation type="journal article" date="2004" name="Nature">
        <title>The DNA sequence and biology of human chromosome 19.</title>
        <authorList>
            <person name="Grimwood J."/>
            <person name="Gordon L.A."/>
            <person name="Olsen A.S."/>
            <person name="Terry A."/>
            <person name="Schmutz J."/>
            <person name="Lamerdin J.E."/>
            <person name="Hellsten U."/>
            <person name="Goodstein D."/>
            <person name="Couronne O."/>
            <person name="Tran-Gyamfi M."/>
            <person name="Aerts A."/>
            <person name="Altherr M."/>
            <person name="Ashworth L."/>
            <person name="Bajorek E."/>
            <person name="Black S."/>
            <person name="Branscomb E."/>
            <person name="Caenepeel S."/>
            <person name="Carrano A.V."/>
            <person name="Caoile C."/>
            <person name="Chan Y.M."/>
            <person name="Christensen M."/>
            <person name="Cleland C.A."/>
            <person name="Copeland A."/>
            <person name="Dalin E."/>
            <person name="Dehal P."/>
            <person name="Denys M."/>
            <person name="Detter J.C."/>
            <person name="Escobar J."/>
            <person name="Flowers D."/>
            <person name="Fotopulos D."/>
            <person name="Garcia C."/>
            <person name="Georgescu A.M."/>
            <person name="Glavina T."/>
            <person name="Gomez M."/>
            <person name="Gonzales E."/>
            <person name="Groza M."/>
            <person name="Hammon N."/>
            <person name="Hawkins T."/>
            <person name="Haydu L."/>
            <person name="Ho I."/>
            <person name="Huang W."/>
            <person name="Israni S."/>
            <person name="Jett J."/>
            <person name="Kadner K."/>
            <person name="Kimball H."/>
            <person name="Kobayashi A."/>
            <person name="Larionov V."/>
            <person name="Leem S.-H."/>
            <person name="Lopez F."/>
            <person name="Lou Y."/>
            <person name="Lowry S."/>
            <person name="Malfatti S."/>
            <person name="Martinez D."/>
            <person name="McCready P.M."/>
            <person name="Medina C."/>
            <person name="Morgan J."/>
            <person name="Nelson K."/>
            <person name="Nolan M."/>
            <person name="Ovcharenko I."/>
            <person name="Pitluck S."/>
            <person name="Pollard M."/>
            <person name="Popkie A.P."/>
            <person name="Predki P."/>
            <person name="Quan G."/>
            <person name="Ramirez L."/>
            <person name="Rash S."/>
            <person name="Retterer J."/>
            <person name="Rodriguez A."/>
            <person name="Rogers S."/>
            <person name="Salamov A."/>
            <person name="Salazar A."/>
            <person name="She X."/>
            <person name="Smith D."/>
            <person name="Slezak T."/>
            <person name="Solovyev V."/>
            <person name="Thayer N."/>
            <person name="Tice H."/>
            <person name="Tsai M."/>
            <person name="Ustaszewska A."/>
            <person name="Vo N."/>
            <person name="Wagner M."/>
            <person name="Wheeler J."/>
            <person name="Wu K."/>
            <person name="Xie G."/>
            <person name="Yang J."/>
            <person name="Dubchak I."/>
            <person name="Furey T.S."/>
            <person name="DeJong P."/>
            <person name="Dickson M."/>
            <person name="Gordon D."/>
            <person name="Eichler E.E."/>
            <person name="Pennacchio L.A."/>
            <person name="Richardson P."/>
            <person name="Stubbs L."/>
            <person name="Rokhsar D.S."/>
            <person name="Myers R.M."/>
            <person name="Rubin E.M."/>
            <person name="Lucas S.M."/>
        </authorList>
    </citation>
    <scope>NUCLEOTIDE SEQUENCE [LARGE SCALE GENOMIC DNA]</scope>
</reference>
<reference key="8">
    <citation type="journal article" date="2004" name="Genome Res.">
        <title>The status, quality, and expansion of the NIH full-length cDNA project: the Mammalian Gene Collection (MGC).</title>
        <authorList>
            <consortium name="The MGC Project Team"/>
        </authorList>
    </citation>
    <scope>NUCLEOTIDE SEQUENCE [LARGE SCALE MRNA] (ISOFORM 1)</scope>
    <scope>VARIANTS ASP-20; GLY-223 AND ARG-414</scope>
    <source>
        <tissue>Brain</tissue>
    </source>
</reference>
<reference key="9">
    <citation type="journal article" date="1997" name="J. Exp. Med.">
        <title>A novel inhibitory receptor (ILT3) expressed on monocytes, macrophages, and dendritic cells involved in antigen processing.</title>
        <authorList>
            <person name="Cella M."/>
            <person name="Doehring C."/>
            <person name="Samaridis J."/>
            <person name="Dessing M."/>
            <person name="Brockhaus M."/>
            <person name="Lanzavecchia A."/>
            <person name="Colonna M."/>
        </authorList>
    </citation>
    <scope>FUNCTION</scope>
    <scope>INTERACTION WITH PTPN6</scope>
    <scope>PHOSPHORYLATION</scope>
    <scope>TISSUE SPECIFICITY</scope>
    <scope>SUBCELLULAR LOCATION</scope>
</reference>
<reference key="10">
    <citation type="journal article" date="2002" name="Nat. Immunol.">
        <title>Tolerization of dendritic cells by T(S) cells: the crucial role of inhibitory receptors ILT3 and ILT4.</title>
        <authorList>
            <person name="Chang C.C."/>
            <person name="Ciubotariu R."/>
            <person name="Manavalan J.S."/>
            <person name="Yuan J."/>
            <person name="Colovai A.I."/>
            <person name="Piazza F."/>
            <person name="Lederman S."/>
            <person name="Colonna M."/>
            <person name="Cortesini R."/>
            <person name="Dalla-Favera R."/>
            <person name="Suciu-Foca N."/>
        </authorList>
    </citation>
    <scope>FUNCTION</scope>
    <scope>INDUCTION</scope>
</reference>
<reference key="11">
    <citation type="journal article" date="2006" name="J. Immunol.">
        <title>Recombinant Ig-like transcript 3-Fc modulates T cell responses via induction of Th anergy and differentiation of CD8+ T suppressor cells.</title>
        <authorList>
            <person name="Kim-Schulze S."/>
            <person name="Scotto L."/>
            <person name="Vlad G."/>
            <person name="Piazza F."/>
            <person name="Lin H."/>
            <person name="Liu Z."/>
            <person name="Cortesini R."/>
            <person name="Suciu-Foca N."/>
        </authorList>
    </citation>
    <scope>FUNCTION</scope>
    <scope>INTERACTION WITH PTPN6</scope>
</reference>
<reference key="12">
    <citation type="journal article" date="2009" name="BMC Immunol.">
        <title>The inhibitory receptor LILRB4 (ILT3) modulates antigen presenting cell phenotype and, along with LILRB2 (ILT4), is upregulated in response to Salmonella infection.</title>
        <authorList>
            <person name="Brown D.P."/>
            <person name="Jones D.C."/>
            <person name="Anderson K.J."/>
            <person name="Lapaque N."/>
            <person name="Buerki R.A."/>
            <person name="Trowsdale J."/>
            <person name="Allen R.L."/>
        </authorList>
    </citation>
    <scope>FUNCTION</scope>
    <scope>INDUCTION</scope>
</reference>
<reference key="13">
    <citation type="journal article" date="2009" name="J. Biol. Chem.">
        <title>Leukocyte Ig-like receptor B4 (LILRB4) is a potent inhibitor of FcgammaRI-mediated monocyte activation via dephosphorylation of multiple kinases.</title>
        <authorList>
            <person name="Lu H.K."/>
            <person name="Rentero C."/>
            <person name="Raftery M.J."/>
            <person name="Borges L."/>
            <person name="Bryant K."/>
            <person name="Tedla N."/>
        </authorList>
    </citation>
    <scope>FUNCTION</scope>
    <scope>SUBCELLULAR LOCATION</scope>
    <scope>TISSUE SPECIFICITY</scope>
</reference>
<reference key="14">
    <citation type="journal article" date="2014" name="J. Proteomics">
        <title>An enzyme assisted RP-RPLC approach for in-depth analysis of human liver phosphoproteome.</title>
        <authorList>
            <person name="Bian Y."/>
            <person name="Song C."/>
            <person name="Cheng K."/>
            <person name="Dong M."/>
            <person name="Wang F."/>
            <person name="Huang J."/>
            <person name="Sun D."/>
            <person name="Wang L."/>
            <person name="Ye M."/>
            <person name="Zou H."/>
        </authorList>
    </citation>
    <scope>PHOSPHORYLATION [LARGE SCALE ANALYSIS] AT SER-319</scope>
    <scope>IDENTIFICATION BY MASS SPECTROMETRY [LARGE SCALE ANALYSIS]</scope>
    <source>
        <tissue>Liver</tissue>
    </source>
</reference>
<reference key="15">
    <citation type="journal article" date="2018" name="J. Immunol.">
        <title>ILT3.Fc-CD166 Interaction Induces Inactivation of p70 S6 Kinase and Inhibits Tumor Cell Growth.</title>
        <authorList>
            <person name="Xu Z."/>
            <person name="Chang C.C."/>
            <person name="Li M."/>
            <person name="Zhang Q.Y."/>
            <person name="Vasilescu E.M."/>
            <person name="D'Agati V."/>
            <person name="Floratos A."/>
            <person name="Vlad G."/>
            <person name="Suciu-Foca N."/>
        </authorList>
    </citation>
    <scope>FUNCTION</scope>
</reference>
<reference key="16">
    <citation type="journal article" date="2018" name="Nature">
        <title>LILRB4 signalling in leukaemia cells mediates T cell suppression and tumour infiltration.</title>
        <authorList>
            <person name="Deng M."/>
            <person name="Gui X."/>
            <person name="Kim J."/>
            <person name="Xie L."/>
            <person name="Chen W."/>
            <person name="Li Z."/>
            <person name="He L."/>
            <person name="Chen Y."/>
            <person name="Chen H."/>
            <person name="Luo W."/>
            <person name="Lu Z."/>
            <person name="Xie J."/>
            <person name="Churchill H."/>
            <person name="Xu Y."/>
            <person name="Zhou Z."/>
            <person name="Wu G."/>
            <person name="Yu C."/>
            <person name="John S."/>
            <person name="Hirayasu K."/>
            <person name="Nguyen N."/>
            <person name="Liu X."/>
            <person name="Huang F."/>
            <person name="Li L."/>
            <person name="Deng H."/>
            <person name="Tang H."/>
            <person name="Sadek A.H."/>
            <person name="Zhang L."/>
            <person name="Huang T."/>
            <person name="Zou Y."/>
            <person name="Chen B."/>
            <person name="Zhu H."/>
            <person name="Arase H."/>
            <person name="Xia N."/>
            <person name="Jiang Y."/>
            <person name="Collins R."/>
            <person name="You M.J."/>
            <person name="Homsi J."/>
            <person name="Unni N."/>
            <person name="Lewis C."/>
            <person name="Chen G.Q."/>
            <person name="Fu Y.X."/>
            <person name="Liao X.C."/>
            <person name="An Z."/>
            <person name="Zheng J."/>
            <person name="Zhang N."/>
            <person name="Zhang C.C."/>
        </authorList>
    </citation>
    <scope>FUNCTION</scope>
    <scope>TISSUE SPECIFICITY</scope>
    <scope>ROLE IN TUMOR CELL INFILTRATION</scope>
    <scope>MUTAGENESIS OF THR-30; PRO-35; TRP-41; ARG-59; GLU-63; GLU-64; SER-65; PRO-66; PRO-68; ASP-91; ARG-95; ARG-97; PRO-103; TRP-106; PRO-109; ASP-111; PRO-112; LEU-113; GLU-114; TYR-121; SER-122; ARG-147; PRO-149; HIS-162; LEU-164; LEU-165; LEU-167; GLU-170; SER-183; PRO-184; THR-186; VAL-188; HIS-199; PHE-201 AND SER-202</scope>
</reference>
<reference key="17">
    <citation type="journal article" date="2021" name="Int. Immunol.">
        <title>Blockade of checkpoint ILT3/LILRB4/gp49B binding to fibronectin ameliorates autoimmune disease in BXSB/Yaa mice.</title>
        <authorList>
            <person name="Su M.T."/>
            <person name="Inui M."/>
            <person name="Wong Y.L."/>
            <person name="Takahashi M."/>
            <person name="Sugahara-Tobinai A."/>
            <person name="Ono K."/>
            <person name="Miyamoto S."/>
            <person name="Murakami K."/>
            <person name="Itoh-Nakadai A."/>
            <person name="Kezuka D."/>
            <person name="Itoi S."/>
            <person name="Endo S."/>
            <person name="Hirayasu K."/>
            <person name="Arase H."/>
            <person name="Takai T."/>
        </authorList>
    </citation>
    <scope>FUNCTION</scope>
</reference>
<reference key="18">
    <citation type="journal article" date="2011" name="J. Biol. Chem.">
        <title>Crystal structure of leukocyte Ig-like receptor LILRB4 (ILT3/LIR-5/CD85k): a myeloid inhibitory receptor involved in immune tolerance.</title>
        <authorList>
            <person name="Cheng H."/>
            <person name="Mohammed F."/>
            <person name="Nam G."/>
            <person name="Chen Y."/>
            <person name="Qi J."/>
            <person name="Garner L.I."/>
            <person name="Allen R.L."/>
            <person name="Yan J."/>
            <person name="Willcox B.E."/>
            <person name="Gao G.F."/>
        </authorList>
    </citation>
    <scope>X-RAY CRYSTALLOGRAPHY (1.7 ANGSTROMS) OF 24-219</scope>
    <scope>DISULFIDE BONDS</scope>
</reference>
<sequence length="448" mass="49356">MIPTFTALLCLGLSLGPRTHMQAGPLPKPTLWAEPGSVISWGNSVTIWCQGTLEAREYRLDKEESPAPWDRQNPLEPKNKARFSIPSMTEDYAGRYRCYYRSPVGWSQPSDPLELVMTGAYSKPTLSALPSPLVTSGKSVTLLCQSRSPMDTFLLIKERAAHPLLHLRSEHGAQQHQAEFPMSPVTSVHGGTYRCFSSHGFSHYLLSHPSDPLELIVSGSLEDPRPSPTRSVSTAAGPEDQPLMPTGSVPHSGLRRHWEVLIGVLVVSILLLSLLLFLLLQHWRQGKHRTLAQRQADFQRPPGAAEPEPKDGGLQRRSSPAADVQGENFCAAVKNTQPEDGVEMDTRQSPHDEDPQAVTYAKVKHSRPRREMASPPSPLSGEFLDTKDRQAEEDRQMDTEAAASEAPQDVTYAQLHSFTLRQKATEPPPSQEGASPAEPSVYATLAIH</sequence>
<name>LIRB4_HUMAN</name>
<dbReference type="EMBL" id="U91925">
    <property type="protein sequence ID" value="AAB68665.1"/>
    <property type="molecule type" value="mRNA"/>
</dbReference>
<dbReference type="EMBL" id="AF025532">
    <property type="protein sequence ID" value="AAB87666.1"/>
    <property type="molecule type" value="mRNA"/>
</dbReference>
<dbReference type="EMBL" id="AF189768">
    <property type="protein sequence ID" value="AAG02024.1"/>
    <property type="molecule type" value="Genomic_DNA"/>
</dbReference>
<dbReference type="EMBL" id="AF283988">
    <property type="protein sequence ID" value="AAL36992.1"/>
    <property type="molecule type" value="mRNA"/>
</dbReference>
<dbReference type="EMBL" id="CR542048">
    <property type="protein sequence ID" value="CAG46845.1"/>
    <property type="molecule type" value="mRNA"/>
</dbReference>
<dbReference type="EMBL" id="CR609786">
    <property type="status" value="NOT_ANNOTATED_CDS"/>
    <property type="molecule type" value="mRNA"/>
</dbReference>
<dbReference type="EMBL" id="AC009892">
    <property type="status" value="NOT_ANNOTATED_CDS"/>
    <property type="molecule type" value="Genomic_DNA"/>
</dbReference>
<dbReference type="EMBL" id="AC011515">
    <property type="status" value="NOT_ANNOTATED_CDS"/>
    <property type="molecule type" value="Genomic_DNA"/>
</dbReference>
<dbReference type="EMBL" id="BC026309">
    <property type="protein sequence ID" value="AAH26309.1"/>
    <property type="molecule type" value="mRNA"/>
</dbReference>
<dbReference type="CCDS" id="CCDS12902.1">
    <molecule id="Q8NHJ6-1"/>
</dbReference>
<dbReference type="CCDS" id="CCDS42618.1">
    <molecule id="Q8NHJ6-2"/>
</dbReference>
<dbReference type="CCDS" id="CCDS92687.1">
    <molecule id="Q8NHJ6-3"/>
</dbReference>
<dbReference type="RefSeq" id="NP_001265355.2">
    <property type="nucleotide sequence ID" value="NM_001278426.3"/>
</dbReference>
<dbReference type="RefSeq" id="NP_001265356.2">
    <property type="nucleotide sequence ID" value="NM_001278427.3"/>
</dbReference>
<dbReference type="RefSeq" id="NP_001265357.2">
    <property type="nucleotide sequence ID" value="NM_001278428.3"/>
</dbReference>
<dbReference type="RefSeq" id="NP_001265358.2">
    <property type="nucleotide sequence ID" value="NM_001278429.3"/>
</dbReference>
<dbReference type="RefSeq" id="NP_001265359.2">
    <property type="nucleotide sequence ID" value="NM_001278430.3"/>
</dbReference>
<dbReference type="PDB" id="3P2T">
    <property type="method" value="X-ray"/>
    <property type="resolution" value="1.70 A"/>
    <property type="chains" value="A=24-219"/>
</dbReference>
<dbReference type="PDB" id="6K7O">
    <property type="method" value="X-ray"/>
    <property type="resolution" value="3.00 A"/>
    <property type="chains" value="A/P/Q/R=24-118"/>
</dbReference>
<dbReference type="PDBsum" id="3P2T"/>
<dbReference type="PDBsum" id="6K7O"/>
<dbReference type="SMR" id="Q8NHJ6"/>
<dbReference type="BioGRID" id="116197">
    <property type="interactions" value="26"/>
</dbReference>
<dbReference type="FunCoup" id="Q8NHJ6">
    <property type="interactions" value="108"/>
</dbReference>
<dbReference type="IntAct" id="Q8NHJ6">
    <property type="interactions" value="26"/>
</dbReference>
<dbReference type="STRING" id="9606.ENSP00000375616"/>
<dbReference type="GlyCosmos" id="Q8NHJ6">
    <property type="glycosylation" value="2 sites, 3 glycans"/>
</dbReference>
<dbReference type="GlyGen" id="Q8NHJ6">
    <property type="glycosylation" value="2 sites, 3 O-linked glycans (2 sites)"/>
</dbReference>
<dbReference type="iPTMnet" id="Q8NHJ6"/>
<dbReference type="PhosphoSitePlus" id="Q8NHJ6"/>
<dbReference type="BioMuta" id="LILRB4"/>
<dbReference type="DMDM" id="322510117"/>
<dbReference type="jPOST" id="Q8NHJ6"/>
<dbReference type="MassIVE" id="Q8NHJ6"/>
<dbReference type="PaxDb" id="9606-ENSP00000375616"/>
<dbReference type="PeptideAtlas" id="Q8NHJ6"/>
<dbReference type="ProteomicsDB" id="73714">
    <molecule id="Q8NHJ6-1"/>
</dbReference>
<dbReference type="ProteomicsDB" id="73715">
    <molecule id="Q8NHJ6-2"/>
</dbReference>
<dbReference type="ProteomicsDB" id="73716">
    <molecule id="Q8NHJ6-3"/>
</dbReference>
<dbReference type="Antibodypedia" id="35096">
    <property type="antibodies" value="301 antibodies from 28 providers"/>
</dbReference>
<dbReference type="DNASU" id="11006"/>
<dbReference type="Ensembl" id="ENST00000391736.5">
    <property type="protein sequence ID" value="ENSP00000375616.1"/>
    <property type="gene ID" value="ENSG00000186818.13"/>
</dbReference>
<dbReference type="Ensembl" id="ENST00000612454.4">
    <molecule id="Q8NHJ6-1"/>
    <property type="protein sequence ID" value="ENSP00000479829.1"/>
    <property type="gene ID" value="ENSG00000275730.4"/>
</dbReference>
<dbReference type="Ensembl" id="ENST00000614699.4">
    <molecule id="Q8NHJ6-3"/>
    <property type="protein sequence ID" value="ENSP00000478542.1"/>
    <property type="gene ID" value="ENSG00000275730.4"/>
</dbReference>
<dbReference type="Ensembl" id="ENST00000621693.4">
    <molecule id="Q8NHJ6-2"/>
    <property type="protein sequence ID" value="ENSP00000482234.1"/>
    <property type="gene ID" value="ENSG00000275730.4"/>
</dbReference>
<dbReference type="GeneID" id="11006"/>
<dbReference type="KEGG" id="hsa:11006"/>
<dbReference type="UCSC" id="uc002qgp.5">
    <molecule id="Q8NHJ6-1"/>
    <property type="organism name" value="human"/>
</dbReference>
<dbReference type="AGR" id="HGNC:6608"/>
<dbReference type="CTD" id="11006"/>
<dbReference type="DisGeNET" id="11006"/>
<dbReference type="GeneCards" id="LILRB4"/>
<dbReference type="HGNC" id="HGNC:6608">
    <property type="gene designation" value="LILRB4"/>
</dbReference>
<dbReference type="HPA" id="ENSG00000186818">
    <property type="expression patterns" value="Tissue enhanced (brain, lung, lymphoid tissue)"/>
</dbReference>
<dbReference type="MIM" id="604821">
    <property type="type" value="gene"/>
</dbReference>
<dbReference type="neXtProt" id="NX_Q8NHJ6"/>
<dbReference type="PharmGKB" id="PA30382"/>
<dbReference type="VEuPathDB" id="HostDB:ENSG00000186818"/>
<dbReference type="eggNOG" id="ENOG502RU0A">
    <property type="taxonomic scope" value="Eukaryota"/>
</dbReference>
<dbReference type="InParanoid" id="Q8NHJ6"/>
<dbReference type="OrthoDB" id="9629903at2759"/>
<dbReference type="PAN-GO" id="Q8NHJ6">
    <property type="GO annotations" value="1 GO annotation based on evolutionary models"/>
</dbReference>
<dbReference type="PhylomeDB" id="Q8NHJ6"/>
<dbReference type="TreeFam" id="TF336644"/>
<dbReference type="PathwayCommons" id="Q8NHJ6"/>
<dbReference type="Reactome" id="R-HSA-198933">
    <property type="pathway name" value="Immunoregulatory interactions between a Lymphoid and a non-Lymphoid cell"/>
</dbReference>
<dbReference type="SignaLink" id="Q8NHJ6"/>
<dbReference type="SIGNOR" id="Q8NHJ6"/>
<dbReference type="BioGRID-ORCS" id="11006">
    <property type="hits" value="7 hits in 1136 CRISPR screens"/>
</dbReference>
<dbReference type="ChiTaRS" id="LILRB4">
    <property type="organism name" value="human"/>
</dbReference>
<dbReference type="EvolutionaryTrace" id="Q8NHJ6"/>
<dbReference type="GeneWiki" id="LILRB4"/>
<dbReference type="GenomeRNAi" id="11006"/>
<dbReference type="Pharos" id="Q8NHJ6">
    <property type="development level" value="Tbio"/>
</dbReference>
<dbReference type="PRO" id="PR:Q8NHJ6"/>
<dbReference type="Proteomes" id="UP000005640">
    <property type="component" value="Chromosome 19"/>
</dbReference>
<dbReference type="RNAct" id="Q8NHJ6">
    <property type="molecule type" value="protein"/>
</dbReference>
<dbReference type="Bgee" id="ENSG00000186818">
    <property type="expression patterns" value="Expressed in vermiform appendix and 102 other cell types or tissues"/>
</dbReference>
<dbReference type="ExpressionAtlas" id="Q8NHJ6">
    <property type="expression patterns" value="baseline and differential"/>
</dbReference>
<dbReference type="GO" id="GO:0009986">
    <property type="term" value="C:cell surface"/>
    <property type="evidence" value="ECO:0000314"/>
    <property type="project" value="UniProtKB"/>
</dbReference>
<dbReference type="GO" id="GO:0009898">
    <property type="term" value="C:cytoplasmic side of plasma membrane"/>
    <property type="evidence" value="ECO:0000304"/>
    <property type="project" value="ARUK-UCL"/>
</dbReference>
<dbReference type="GO" id="GO:0070062">
    <property type="term" value="C:extracellular exosome"/>
    <property type="evidence" value="ECO:0007005"/>
    <property type="project" value="UniProtKB"/>
</dbReference>
<dbReference type="GO" id="GO:0005886">
    <property type="term" value="C:plasma membrane"/>
    <property type="evidence" value="ECO:0000318"/>
    <property type="project" value="GO_Central"/>
</dbReference>
<dbReference type="GO" id="GO:0034185">
    <property type="term" value="F:apolipoprotein binding"/>
    <property type="evidence" value="ECO:0000314"/>
    <property type="project" value="UniProtKB"/>
</dbReference>
<dbReference type="GO" id="GO:0001968">
    <property type="term" value="F:fibronectin binding"/>
    <property type="evidence" value="ECO:0000314"/>
    <property type="project" value="UniProtKB"/>
</dbReference>
<dbReference type="GO" id="GO:0032396">
    <property type="term" value="F:inhibitory MHC class I receptor activity"/>
    <property type="evidence" value="ECO:0000318"/>
    <property type="project" value="GO_Central"/>
</dbReference>
<dbReference type="GO" id="GO:0019903">
    <property type="term" value="F:protein phosphatase binding"/>
    <property type="evidence" value="ECO:0000353"/>
    <property type="project" value="ARUK-UCL"/>
</dbReference>
<dbReference type="GO" id="GO:0030292">
    <property type="term" value="F:protein tyrosine kinase inhibitor activity"/>
    <property type="evidence" value="ECO:0000315"/>
    <property type="project" value="ARUK-UCL"/>
</dbReference>
<dbReference type="GO" id="GO:0030547">
    <property type="term" value="F:signaling receptor inhibitor activity"/>
    <property type="evidence" value="ECO:0000314"/>
    <property type="project" value="ARUK-UCL"/>
</dbReference>
<dbReference type="GO" id="GO:0030293">
    <property type="term" value="F:transmembrane receptor protein tyrosine kinase inhibitor activity"/>
    <property type="evidence" value="ECO:0000314"/>
    <property type="project" value="ARUK-UCL"/>
</dbReference>
<dbReference type="GO" id="GO:0002250">
    <property type="term" value="P:adaptive immune response"/>
    <property type="evidence" value="ECO:0007669"/>
    <property type="project" value="UniProtKB-KW"/>
</dbReference>
<dbReference type="GO" id="GO:0019221">
    <property type="term" value="P:cytokine-mediated signaling pathway"/>
    <property type="evidence" value="ECO:0000318"/>
    <property type="project" value="GO_Central"/>
</dbReference>
<dbReference type="GO" id="GO:0002774">
    <property type="term" value="P:Fc receptor mediated inhibitory signaling pathway"/>
    <property type="evidence" value="ECO:0000314"/>
    <property type="project" value="ARUK-UCL"/>
</dbReference>
<dbReference type="GO" id="GO:0002764">
    <property type="term" value="P:immune response-regulating signaling pathway"/>
    <property type="evidence" value="ECO:0000318"/>
    <property type="project" value="GO_Central"/>
</dbReference>
<dbReference type="GO" id="GO:0140105">
    <property type="term" value="P:interleukin-10-mediated signaling pathway"/>
    <property type="evidence" value="ECO:0000270"/>
    <property type="project" value="ARUK-UCL"/>
</dbReference>
<dbReference type="GO" id="GO:0046007">
    <property type="term" value="P:negative regulation of activated T cell proliferation"/>
    <property type="evidence" value="ECO:0000315"/>
    <property type="project" value="ARUK-UCL"/>
</dbReference>
<dbReference type="GO" id="GO:0043124">
    <property type="term" value="P:negative regulation of canonical NF-kappaB signal transduction"/>
    <property type="evidence" value="ECO:0000315"/>
    <property type="project" value="ARUK-UCL"/>
</dbReference>
<dbReference type="GO" id="GO:0032682">
    <property type="term" value="P:negative regulation of chemokine production"/>
    <property type="evidence" value="ECO:0000315"/>
    <property type="project" value="ARUK-UCL"/>
</dbReference>
<dbReference type="GO" id="GO:1900016">
    <property type="term" value="P:negative regulation of cytokine production involved in inflammatory response"/>
    <property type="evidence" value="ECO:0000315"/>
    <property type="project" value="ARUK-UCL"/>
</dbReference>
<dbReference type="GO" id="GO:0045584">
    <property type="term" value="P:negative regulation of cytotoxic T cell differentiation"/>
    <property type="evidence" value="ECO:0000315"/>
    <property type="project" value="ARUK-UCL"/>
</dbReference>
<dbReference type="GO" id="GO:0032691">
    <property type="term" value="P:negative regulation of interleukin-1 beta production"/>
    <property type="evidence" value="ECO:0000315"/>
    <property type="project" value="ARUK-UCL"/>
</dbReference>
<dbReference type="GO" id="GO:0032693">
    <property type="term" value="P:negative regulation of interleukin-10 production"/>
    <property type="evidence" value="ECO:0000314"/>
    <property type="project" value="ARUK-UCL"/>
</dbReference>
<dbReference type="GO" id="GO:0032703">
    <property type="term" value="P:negative regulation of interleukin-2 production"/>
    <property type="evidence" value="ECO:0000314"/>
    <property type="project" value="ARUK-UCL"/>
</dbReference>
<dbReference type="GO" id="GO:0032714">
    <property type="term" value="P:negative regulation of interleukin-5 production"/>
    <property type="evidence" value="ECO:0000314"/>
    <property type="project" value="ARUK-UCL"/>
</dbReference>
<dbReference type="GO" id="GO:0032715">
    <property type="term" value="P:negative regulation of interleukin-6 production"/>
    <property type="evidence" value="ECO:0000315"/>
    <property type="project" value="ARUK-UCL"/>
</dbReference>
<dbReference type="GO" id="GO:1902532">
    <property type="term" value="P:negative regulation of intracellular signal transduction"/>
    <property type="evidence" value="ECO:0000314"/>
    <property type="project" value="ARUK-UCL"/>
</dbReference>
<dbReference type="GO" id="GO:0071659">
    <property type="term" value="P:negative regulation of IP-10 production"/>
    <property type="evidence" value="ECO:0000315"/>
    <property type="project" value="ARUK-UCL"/>
</dbReference>
<dbReference type="GO" id="GO:0043409">
    <property type="term" value="P:negative regulation of MAPK cascade"/>
    <property type="evidence" value="ECO:0000315"/>
    <property type="project" value="ARUK-UCL"/>
</dbReference>
<dbReference type="GO" id="GO:1902894">
    <property type="term" value="P:negative regulation of miRNA transcription"/>
    <property type="evidence" value="ECO:0000314"/>
    <property type="project" value="BHF-UCL"/>
</dbReference>
<dbReference type="GO" id="GO:0150102">
    <property type="term" value="P:negative regulation of monocyte activation"/>
    <property type="evidence" value="ECO:0000314"/>
    <property type="project" value="UniProtKB"/>
</dbReference>
<dbReference type="GO" id="GO:0045671">
    <property type="term" value="P:negative regulation of osteoclast differentiation"/>
    <property type="evidence" value="ECO:0000314"/>
    <property type="project" value="UniProtKB"/>
</dbReference>
<dbReference type="GO" id="GO:1900181">
    <property type="term" value="P:negative regulation of protein localization to nucleus"/>
    <property type="evidence" value="ECO:0000314"/>
    <property type="project" value="BHF-UCL"/>
</dbReference>
<dbReference type="GO" id="GO:2000524">
    <property type="term" value="P:negative regulation of T cell costimulation"/>
    <property type="evidence" value="ECO:0000315"/>
    <property type="project" value="ARUK-UCL"/>
</dbReference>
<dbReference type="GO" id="GO:0002725">
    <property type="term" value="P:negative regulation of T cell cytokine production"/>
    <property type="evidence" value="ECO:0000314"/>
    <property type="project" value="ARUK-UCL"/>
</dbReference>
<dbReference type="GO" id="GO:0042130">
    <property type="term" value="P:negative regulation of T cell proliferation"/>
    <property type="evidence" value="ECO:0000315"/>
    <property type="project" value="ARUK-UCL"/>
</dbReference>
<dbReference type="GO" id="GO:0050860">
    <property type="term" value="P:negative regulation of T cell receptor signaling pathway"/>
    <property type="evidence" value="ECO:0000314"/>
    <property type="project" value="BHF-UCL"/>
</dbReference>
<dbReference type="GO" id="GO:0032720">
    <property type="term" value="P:negative regulation of tumor necrosis factor production"/>
    <property type="evidence" value="ECO:0000314"/>
    <property type="project" value="UniProtKB"/>
</dbReference>
<dbReference type="GO" id="GO:0032689">
    <property type="term" value="P:negative regulation of type II interferon production"/>
    <property type="evidence" value="ECO:0000314"/>
    <property type="project" value="ARUK-UCL"/>
</dbReference>
<dbReference type="GO" id="GO:0043378">
    <property type="term" value="P:positive regulation of CD8-positive, alpha-beta T cell differentiation"/>
    <property type="evidence" value="ECO:0000314"/>
    <property type="project" value="ARUK-UCL"/>
</dbReference>
<dbReference type="GO" id="GO:0045591">
    <property type="term" value="P:positive regulation of regulatory T cell differentiation"/>
    <property type="evidence" value="ECO:0000314"/>
    <property type="project" value="ARUK-UCL"/>
</dbReference>
<dbReference type="GO" id="GO:0002669">
    <property type="term" value="P:positive regulation of T cell anergy"/>
    <property type="evidence" value="ECO:0000315"/>
    <property type="project" value="ARUK-UCL"/>
</dbReference>
<dbReference type="GO" id="GO:0031623">
    <property type="term" value="P:receptor internalization"/>
    <property type="evidence" value="ECO:0000315"/>
    <property type="project" value="ARUK-UCL"/>
</dbReference>
<dbReference type="GO" id="GO:0002507">
    <property type="term" value="P:tolerance induction"/>
    <property type="evidence" value="ECO:0000314"/>
    <property type="project" value="ARUK-UCL"/>
</dbReference>
<dbReference type="CDD" id="cd05751">
    <property type="entry name" value="IgC2_D1_LILR_KIR_like"/>
    <property type="match status" value="1"/>
</dbReference>
<dbReference type="FunFam" id="2.60.40.10:FF:000049">
    <property type="entry name" value="Leukocyte immunoglobulin-like receptor subfamily B member 1"/>
    <property type="match status" value="2"/>
</dbReference>
<dbReference type="Gene3D" id="2.60.40.10">
    <property type="entry name" value="Immunoglobulins"/>
    <property type="match status" value="2"/>
</dbReference>
<dbReference type="InterPro" id="IPR007110">
    <property type="entry name" value="Ig-like_dom"/>
</dbReference>
<dbReference type="InterPro" id="IPR036179">
    <property type="entry name" value="Ig-like_dom_sf"/>
</dbReference>
<dbReference type="InterPro" id="IPR013783">
    <property type="entry name" value="Ig-like_fold"/>
</dbReference>
<dbReference type="InterPro" id="IPR050412">
    <property type="entry name" value="Ig-like_Receptors_ImmuneReg"/>
</dbReference>
<dbReference type="InterPro" id="IPR013151">
    <property type="entry name" value="Immunoglobulin_dom"/>
</dbReference>
<dbReference type="PANTHER" id="PTHR11738:SF178">
    <property type="entry name" value="LEUKOCYTE IMMUNOGLOBULIN-LIKE RECEPTOR SUBFAMILY B MEMBER 4"/>
    <property type="match status" value="1"/>
</dbReference>
<dbReference type="PANTHER" id="PTHR11738">
    <property type="entry name" value="MHC CLASS I NK CELL RECEPTOR"/>
    <property type="match status" value="1"/>
</dbReference>
<dbReference type="Pfam" id="PF00047">
    <property type="entry name" value="ig"/>
    <property type="match status" value="1"/>
</dbReference>
<dbReference type="Pfam" id="PF13895">
    <property type="entry name" value="Ig_2"/>
    <property type="match status" value="1"/>
</dbReference>
<dbReference type="SUPFAM" id="SSF48726">
    <property type="entry name" value="Immunoglobulin"/>
    <property type="match status" value="2"/>
</dbReference>
<dbReference type="PROSITE" id="PS50835">
    <property type="entry name" value="IG_LIKE"/>
    <property type="match status" value="2"/>
</dbReference>
<evidence type="ECO:0000255" key="1"/>
<evidence type="ECO:0000255" key="2">
    <source>
        <dbReference type="PROSITE-ProRule" id="PRU00114"/>
    </source>
</evidence>
<evidence type="ECO:0000256" key="3">
    <source>
        <dbReference type="SAM" id="MobiDB-lite"/>
    </source>
</evidence>
<evidence type="ECO:0000269" key="4">
    <source>
    </source>
</evidence>
<evidence type="ECO:0000269" key="5">
    <source>
    </source>
</evidence>
<evidence type="ECO:0000269" key="6">
    <source>
    </source>
</evidence>
<evidence type="ECO:0000269" key="7">
    <source>
    </source>
</evidence>
<evidence type="ECO:0000269" key="8">
    <source>
    </source>
</evidence>
<evidence type="ECO:0000269" key="9">
    <source>
    </source>
</evidence>
<evidence type="ECO:0000269" key="10">
    <source>
    </source>
</evidence>
<evidence type="ECO:0000269" key="11">
    <source>
    </source>
</evidence>
<evidence type="ECO:0000269" key="12">
    <source>
    </source>
</evidence>
<evidence type="ECO:0000269" key="13">
    <source>
    </source>
</evidence>
<evidence type="ECO:0000269" key="14">
    <source>
    </source>
</evidence>
<evidence type="ECO:0000269" key="15">
    <source>
    </source>
</evidence>
<evidence type="ECO:0000269" key="16">
    <source>
    </source>
</evidence>
<evidence type="ECO:0000303" key="17">
    <source>
    </source>
</evidence>
<evidence type="ECO:0000303" key="18">
    <source ref="4"/>
</evidence>
<evidence type="ECO:0000303" key="19">
    <source ref="5"/>
</evidence>
<evidence type="ECO:0000303" key="20">
    <source ref="6"/>
</evidence>
<evidence type="ECO:0000305" key="21"/>
<evidence type="ECO:0007744" key="22">
    <source>
    </source>
</evidence>
<evidence type="ECO:0007829" key="23">
    <source>
        <dbReference type="PDB" id="3P2T"/>
    </source>
</evidence>
<organism>
    <name type="scientific">Homo sapiens</name>
    <name type="common">Human</name>
    <dbReference type="NCBI Taxonomy" id="9606"/>
    <lineage>
        <taxon>Eukaryota</taxon>
        <taxon>Metazoa</taxon>
        <taxon>Chordata</taxon>
        <taxon>Craniata</taxon>
        <taxon>Vertebrata</taxon>
        <taxon>Euteleostomi</taxon>
        <taxon>Mammalia</taxon>
        <taxon>Eutheria</taxon>
        <taxon>Euarchontoglires</taxon>
        <taxon>Primates</taxon>
        <taxon>Haplorrhini</taxon>
        <taxon>Catarrhini</taxon>
        <taxon>Hominidae</taxon>
        <taxon>Homo</taxon>
    </lineage>
</organism>
<feature type="signal peptide" evidence="1">
    <location>
        <begin position="1"/>
        <end position="21"/>
    </location>
</feature>
<feature type="chain" id="PRO_0000014823" description="Leukocyte immunoglobulin-like receptor subfamily B member 4">
    <location>
        <begin position="22"/>
        <end position="448"/>
    </location>
</feature>
<feature type="topological domain" description="Extracellular" evidence="1">
    <location>
        <begin position="22"/>
        <end position="259"/>
    </location>
</feature>
<feature type="transmembrane region" description="Helical" evidence="1">
    <location>
        <begin position="260"/>
        <end position="280"/>
    </location>
</feature>
<feature type="topological domain" description="Cytoplasmic" evidence="1">
    <location>
        <begin position="281"/>
        <end position="448"/>
    </location>
</feature>
<feature type="domain" description="Ig-like C2-type 1">
    <location>
        <begin position="27"/>
        <end position="118"/>
    </location>
</feature>
<feature type="domain" description="Ig-like C2-type 2">
    <location>
        <begin position="124"/>
        <end position="218"/>
    </location>
</feature>
<feature type="region of interest" description="Disordered" evidence="3">
    <location>
        <begin position="217"/>
        <end position="248"/>
    </location>
</feature>
<feature type="region of interest" description="Disordered" evidence="3">
    <location>
        <begin position="297"/>
        <end position="448"/>
    </location>
</feature>
<feature type="short sequence motif" description="ITIM motif 1">
    <location>
        <begin position="358"/>
        <end position="363"/>
    </location>
</feature>
<feature type="short sequence motif" description="ITIM motif 2">
    <location>
        <begin position="410"/>
        <end position="415"/>
    </location>
</feature>
<feature type="short sequence motif" description="ITIM motif 3">
    <location>
        <begin position="440"/>
        <end position="445"/>
    </location>
</feature>
<feature type="compositionally biased region" description="Basic and acidic residues" evidence="3">
    <location>
        <begin position="344"/>
        <end position="354"/>
    </location>
</feature>
<feature type="compositionally biased region" description="Basic and acidic residues" evidence="3">
    <location>
        <begin position="384"/>
        <end position="398"/>
    </location>
</feature>
<feature type="site" description="Required for APOE-mediated activation of LILRB4" evidence="12">
    <location>
        <position position="35"/>
    </location>
</feature>
<feature type="site" description="Required for APOE-mediated activation of LILRB4" evidence="12">
    <location>
        <position position="106"/>
    </location>
</feature>
<feature type="site" description="Required for APOE-mediated activation of LILRB4" evidence="12">
    <location>
        <position position="121"/>
    </location>
</feature>
<feature type="modified residue" description="Phosphoserine" evidence="22">
    <location>
        <position position="319"/>
    </location>
</feature>
<feature type="disulfide bond" evidence="2 10">
    <location>
        <begin position="49"/>
        <end position="98"/>
    </location>
</feature>
<feature type="disulfide bond" evidence="2 10">
    <location>
        <begin position="144"/>
        <end position="195"/>
    </location>
</feature>
<feature type="splice variant" id="VSP_035939" description="In isoform 3." evidence="20">
    <original>C</original>
    <variation>SG</variation>
    <location>
        <position position="330"/>
    </location>
</feature>
<feature type="splice variant" id="VSP_008460" description="In isoform 2." evidence="18 19">
    <location>
        <position position="348"/>
    </location>
</feature>
<feature type="sequence variant" id="VAR_025501" description="In dbSNP:rs28366008." evidence="4">
    <original>F</original>
    <variation>L</variation>
    <location>
        <position position="5"/>
    </location>
</feature>
<feature type="sequence variant" id="VAR_025502" description="In dbSNP:rs11540761.">
    <original>R</original>
    <variation>S</variation>
    <location>
        <position position="18"/>
    </location>
</feature>
<feature type="sequence variant" id="VAR_047846" description="In dbSNP:rs11540762." evidence="6">
    <original>H</original>
    <variation>D</variation>
    <location>
        <position position="20"/>
    </location>
</feature>
<feature type="sequence variant" id="VAR_017014" description="In dbSNP:rs731170." evidence="4 6 15 16">
    <original>D</original>
    <variation>G</variation>
    <location>
        <position position="223"/>
    </location>
</feature>
<feature type="sequence variant" id="VAR_025503" description="In dbSNP:rs11574575.">
    <original>C</original>
    <variation>Y</variation>
    <location>
        <position position="330"/>
    </location>
</feature>
<feature type="sequence variant" id="VAR_025504" description="In dbSNP:rs11574576.">
    <original>N</original>
    <variation>D</variation>
    <location>
        <position position="335"/>
    </location>
</feature>
<feature type="sequence variant" id="VAR_017015" description="In dbSNP:rs2764337." evidence="4">
    <original>K</original>
    <variation>E</variation>
    <location>
        <position position="362"/>
    </location>
</feature>
<feature type="sequence variant" id="VAR_030939" description="In dbSNP:rs11574589.">
    <original>K</original>
    <variation>T</variation>
    <location>
        <position position="362"/>
    </location>
</feature>
<feature type="sequence variant" id="VAR_025505" description="In dbSNP:rs1048801." evidence="6 16">
    <original>Q</original>
    <variation>R</variation>
    <location>
        <position position="414"/>
    </location>
</feature>
<feature type="mutagenesis site" description="No significant change in APOE-mediated activation of LILRB4." evidence="12">
    <original>T</original>
    <variation>A</variation>
    <location>
        <position position="30"/>
    </location>
</feature>
<feature type="mutagenesis site" description="Significant reduction in APOE-mediated activation of LILRB4." evidence="12">
    <original>P</original>
    <variation>A</variation>
    <location>
        <position position="35"/>
    </location>
</feature>
<feature type="mutagenesis site" description="No significant change in APOE-mediated activation of LILRB4." evidence="12">
    <original>W</original>
    <variation>A</variation>
    <location>
        <position position="41"/>
    </location>
</feature>
<feature type="mutagenesis site" description="No significant change in APOE-mediated activation of LILRB4." evidence="12">
    <original>R</original>
    <variation>A</variation>
    <location>
        <position position="59"/>
    </location>
</feature>
<feature type="mutagenesis site" description="No significant change in APOE-mediated activation of LILRB4." evidence="12">
    <original>E</original>
    <variation>A</variation>
    <location>
        <position position="63"/>
    </location>
</feature>
<feature type="mutagenesis site" description="No significant change in APOE-mediated activation of LILRB4." evidence="12">
    <original>E</original>
    <variation>A</variation>
    <location>
        <position position="64"/>
    </location>
</feature>
<feature type="mutagenesis site" description="No significant change in APOE-mediated activation of LILRB4." evidence="12">
    <original>S</original>
    <variation>A</variation>
    <location>
        <position position="65"/>
    </location>
</feature>
<feature type="mutagenesis site" description="No significant change in APOE-mediated activation of LILRB4." evidence="12">
    <original>P</original>
    <variation>A</variation>
    <location>
        <position position="66"/>
    </location>
</feature>
<feature type="mutagenesis site" description="No significant change in APOE-mediated activation of LILRB4." evidence="12">
    <original>P</original>
    <variation>A</variation>
    <location>
        <position position="68"/>
    </location>
</feature>
<feature type="mutagenesis site" description="No significant change in APOE-mediated activation of LILRB4." evidence="12">
    <original>D</original>
    <variation>A</variation>
    <location>
        <position position="91"/>
    </location>
</feature>
<feature type="mutagenesis site" description="No significant change in APOE-mediated activation of LILRB4." evidence="12">
    <original>R</original>
    <variation>A</variation>
    <location>
        <position position="95"/>
    </location>
</feature>
<feature type="mutagenesis site" description="No significant change in APOE-mediated activation of LILRB4." evidence="12">
    <original>R</original>
    <variation>A</variation>
    <location>
        <position position="97"/>
    </location>
</feature>
<feature type="mutagenesis site" description="No significant change in APOE-mediated activation of LILRB4." evidence="12">
    <original>P</original>
    <variation>A</variation>
    <location>
        <position position="103"/>
    </location>
</feature>
<feature type="mutagenesis site" description="Significant reduction in APOE-mediated activation of LILRB4." evidence="12">
    <original>W</original>
    <variation>A</variation>
    <location>
        <position position="106"/>
    </location>
</feature>
<feature type="mutagenesis site" description="No significant change in APOE-mediated activation of LILRB4." evidence="12">
    <original>P</original>
    <variation>A</variation>
    <location>
        <position position="109"/>
    </location>
</feature>
<feature type="mutagenesis site" description="No significant change in APOE-mediated activation of LILRB4." evidence="12">
    <original>D</original>
    <variation>A</variation>
    <location>
        <position position="111"/>
    </location>
</feature>
<feature type="mutagenesis site" description="No significant change in APOE-mediated activation of LILRB4." evidence="12">
    <original>P</original>
    <variation>A</variation>
    <location>
        <position position="112"/>
    </location>
</feature>
<feature type="mutagenesis site" description="No significant change in APOE-mediated activation of LILRB4." evidence="12">
    <original>L</original>
    <variation>A</variation>
    <location>
        <position position="113"/>
    </location>
</feature>
<feature type="mutagenesis site" description="No significant change in APOE-mediated activation of LILRB4." evidence="12">
    <original>E</original>
    <variation>A</variation>
    <location>
        <position position="114"/>
    </location>
</feature>
<feature type="mutagenesis site" description="Significant reduction in APOE-mediated activation of LILRB4." evidence="12">
    <original>Y</original>
    <variation>A</variation>
    <location>
        <position position="121"/>
    </location>
</feature>
<feature type="mutagenesis site" description="No significant change in APOE-mediated activation of LILRB4." evidence="12">
    <original>S</original>
    <variation>A</variation>
    <location>
        <position position="122"/>
    </location>
</feature>
<feature type="mutagenesis site" description="No significant change in APOE-mediated activation of LILRB4." evidence="12">
    <original>R</original>
    <variation>A</variation>
    <location>
        <position position="147"/>
    </location>
</feature>
<feature type="mutagenesis site" description="No significant change in APOE-mediated activation of LILRB4." evidence="12">
    <original>P</original>
    <variation>A</variation>
    <location>
        <position position="149"/>
    </location>
</feature>
<feature type="mutagenesis site" description="No significant change in APOE-mediated activation of LILRB4." evidence="12">
    <original>H</original>
    <variation>A</variation>
    <location>
        <position position="162"/>
    </location>
</feature>
<feature type="mutagenesis site" description="No significant change in APOE-mediated activation of LILRB4." evidence="12">
    <original>L</original>
    <variation>A</variation>
    <location>
        <position position="164"/>
    </location>
</feature>
<feature type="mutagenesis site" description="No significant change in APOE-mediated activation of LILRB4." evidence="12">
    <original>L</original>
    <variation>A</variation>
    <location>
        <position position="165"/>
    </location>
</feature>
<feature type="mutagenesis site" description="No significant change in APOE-mediated activation of LILRB4." evidence="12">
    <original>L</original>
    <variation>A</variation>
    <location>
        <position position="167"/>
    </location>
</feature>
<feature type="mutagenesis site" description="No significant change in APOE-mediated activation of LILRB4." evidence="12">
    <original>E</original>
    <variation>A</variation>
    <location>
        <position position="170"/>
    </location>
</feature>
<feature type="mutagenesis site" description="No significant change in APOE-mediated activation of LILRB4." evidence="12">
    <original>S</original>
    <variation>A</variation>
    <location>
        <position position="183"/>
    </location>
</feature>
<feature type="mutagenesis site" description="No significant change in APOE-mediated activation of LILRB4." evidence="12">
    <original>P</original>
    <variation>A</variation>
    <location>
        <position position="184"/>
    </location>
</feature>
<feature type="mutagenesis site" description="No significant change in APOE-mediated activation of LILRB4." evidence="12">
    <original>T</original>
    <variation>A</variation>
    <location>
        <position position="186"/>
    </location>
</feature>
<feature type="mutagenesis site" description="No significant change in APOE-mediated activation of LILRB4." evidence="12">
    <original>V</original>
    <variation>A</variation>
    <location>
        <position position="188"/>
    </location>
</feature>
<feature type="mutagenesis site" description="No significant change in APOE-mediated activation of LILRB4." evidence="12">
    <original>H</original>
    <variation>A</variation>
    <location>
        <position position="199"/>
    </location>
</feature>
<feature type="mutagenesis site" description="No significant change in APOE-mediated activation of LILRB4." evidence="12">
    <original>F</original>
    <variation>A</variation>
    <location>
        <position position="201"/>
    </location>
</feature>
<feature type="mutagenesis site" description="No significant change in APOE-mediated activation of LILRB4." evidence="12">
    <original>S</original>
    <variation>A</variation>
    <location>
        <position position="202"/>
    </location>
</feature>
<feature type="strand" evidence="23">
    <location>
        <begin position="30"/>
        <end position="35"/>
    </location>
</feature>
<feature type="strand" evidence="23">
    <location>
        <begin position="37"/>
        <end position="40"/>
    </location>
</feature>
<feature type="strand" evidence="23">
    <location>
        <begin position="45"/>
        <end position="50"/>
    </location>
</feature>
<feature type="strand" evidence="23">
    <location>
        <begin position="57"/>
        <end position="62"/>
    </location>
</feature>
<feature type="strand" evidence="23">
    <location>
        <begin position="69"/>
        <end position="72"/>
    </location>
</feature>
<feature type="strand" evidence="23">
    <location>
        <begin position="76"/>
        <end position="87"/>
    </location>
</feature>
<feature type="helix" evidence="23">
    <location>
        <begin position="90"/>
        <end position="92"/>
    </location>
</feature>
<feature type="strand" evidence="23">
    <location>
        <begin position="94"/>
        <end position="102"/>
    </location>
</feature>
<feature type="strand" evidence="23">
    <location>
        <begin position="105"/>
        <end position="107"/>
    </location>
</feature>
<feature type="strand" evidence="23">
    <location>
        <begin position="113"/>
        <end position="118"/>
    </location>
</feature>
<feature type="strand" evidence="23">
    <location>
        <begin position="125"/>
        <end position="130"/>
    </location>
</feature>
<feature type="strand" evidence="23">
    <location>
        <begin position="132"/>
        <end position="135"/>
    </location>
</feature>
<feature type="strand" evidence="23">
    <location>
        <begin position="140"/>
        <end position="157"/>
    </location>
</feature>
<feature type="helix" evidence="23">
    <location>
        <begin position="163"/>
        <end position="165"/>
    </location>
</feature>
<feature type="strand" evidence="23">
    <location>
        <begin position="166"/>
        <end position="182"/>
    </location>
</feature>
<feature type="helix" evidence="23">
    <location>
        <begin position="187"/>
        <end position="189"/>
    </location>
</feature>
<feature type="strand" evidence="23">
    <location>
        <begin position="191"/>
        <end position="198"/>
    </location>
</feature>
<feature type="helix" evidence="23">
    <location>
        <begin position="200"/>
        <end position="202"/>
    </location>
</feature>
<feature type="strand" evidence="23">
    <location>
        <begin position="213"/>
        <end position="218"/>
    </location>
</feature>
<proteinExistence type="evidence at protein level"/>